<dbReference type="EMBL" id="CP001050">
    <property type="protein sequence ID" value="ACF29815.1"/>
    <property type="molecule type" value="Genomic_DNA"/>
</dbReference>
<dbReference type="RefSeq" id="WP_003688695.1">
    <property type="nucleotide sequence ID" value="NC_011035.1"/>
</dbReference>
<dbReference type="SMR" id="B4RLX8"/>
<dbReference type="GeneID" id="66753085"/>
<dbReference type="KEGG" id="ngk:NGK_1138"/>
<dbReference type="HOGENOM" id="CLU_040469_3_2_4"/>
<dbReference type="Proteomes" id="UP000002564">
    <property type="component" value="Chromosome"/>
</dbReference>
<dbReference type="GO" id="GO:0005829">
    <property type="term" value="C:cytosol"/>
    <property type="evidence" value="ECO:0007669"/>
    <property type="project" value="TreeGrafter"/>
</dbReference>
<dbReference type="GO" id="GO:0005524">
    <property type="term" value="F:ATP binding"/>
    <property type="evidence" value="ECO:0007669"/>
    <property type="project" value="UniProtKB-UniRule"/>
</dbReference>
<dbReference type="GO" id="GO:0016887">
    <property type="term" value="F:ATP hydrolysis activity"/>
    <property type="evidence" value="ECO:0007669"/>
    <property type="project" value="InterPro"/>
</dbReference>
<dbReference type="GO" id="GO:0140664">
    <property type="term" value="F:ATP-dependent DNA damage sensor activity"/>
    <property type="evidence" value="ECO:0007669"/>
    <property type="project" value="InterPro"/>
</dbReference>
<dbReference type="GO" id="GO:0003684">
    <property type="term" value="F:damaged DNA binding"/>
    <property type="evidence" value="ECO:0007669"/>
    <property type="project" value="UniProtKB-UniRule"/>
</dbReference>
<dbReference type="GO" id="GO:0003697">
    <property type="term" value="F:single-stranded DNA binding"/>
    <property type="evidence" value="ECO:0007669"/>
    <property type="project" value="UniProtKB-UniRule"/>
</dbReference>
<dbReference type="GO" id="GO:0006310">
    <property type="term" value="P:DNA recombination"/>
    <property type="evidence" value="ECO:0007669"/>
    <property type="project" value="UniProtKB-UniRule"/>
</dbReference>
<dbReference type="GO" id="GO:0006281">
    <property type="term" value="P:DNA repair"/>
    <property type="evidence" value="ECO:0007669"/>
    <property type="project" value="UniProtKB-UniRule"/>
</dbReference>
<dbReference type="GO" id="GO:0009432">
    <property type="term" value="P:SOS response"/>
    <property type="evidence" value="ECO:0007669"/>
    <property type="project" value="UniProtKB-UniRule"/>
</dbReference>
<dbReference type="CDD" id="cd00983">
    <property type="entry name" value="RecA"/>
    <property type="match status" value="1"/>
</dbReference>
<dbReference type="FunFam" id="3.40.50.300:FF:000087">
    <property type="entry name" value="Recombinase RecA"/>
    <property type="match status" value="1"/>
</dbReference>
<dbReference type="Gene3D" id="3.40.50.300">
    <property type="entry name" value="P-loop containing nucleotide triphosphate hydrolases"/>
    <property type="match status" value="1"/>
</dbReference>
<dbReference type="HAMAP" id="MF_00268">
    <property type="entry name" value="RecA"/>
    <property type="match status" value="1"/>
</dbReference>
<dbReference type="InterPro" id="IPR003593">
    <property type="entry name" value="AAA+_ATPase"/>
</dbReference>
<dbReference type="InterPro" id="IPR013765">
    <property type="entry name" value="DNA_recomb/repair_RecA"/>
</dbReference>
<dbReference type="InterPro" id="IPR020584">
    <property type="entry name" value="DNA_recomb/repair_RecA_CS"/>
</dbReference>
<dbReference type="InterPro" id="IPR027417">
    <property type="entry name" value="P-loop_NTPase"/>
</dbReference>
<dbReference type="InterPro" id="IPR049261">
    <property type="entry name" value="RecA-like_C"/>
</dbReference>
<dbReference type="InterPro" id="IPR049428">
    <property type="entry name" value="RecA-like_N"/>
</dbReference>
<dbReference type="InterPro" id="IPR020588">
    <property type="entry name" value="RecA_ATP-bd"/>
</dbReference>
<dbReference type="InterPro" id="IPR023400">
    <property type="entry name" value="RecA_C_sf"/>
</dbReference>
<dbReference type="InterPro" id="IPR020587">
    <property type="entry name" value="RecA_monomer-monomer_interface"/>
</dbReference>
<dbReference type="NCBIfam" id="TIGR02012">
    <property type="entry name" value="tigrfam_recA"/>
    <property type="match status" value="1"/>
</dbReference>
<dbReference type="PANTHER" id="PTHR45900:SF1">
    <property type="entry name" value="MITOCHONDRIAL DNA REPAIR PROTEIN RECA HOMOLOG-RELATED"/>
    <property type="match status" value="1"/>
</dbReference>
<dbReference type="PANTHER" id="PTHR45900">
    <property type="entry name" value="RECA"/>
    <property type="match status" value="1"/>
</dbReference>
<dbReference type="Pfam" id="PF00154">
    <property type="entry name" value="RecA"/>
    <property type="match status" value="1"/>
</dbReference>
<dbReference type="Pfam" id="PF21096">
    <property type="entry name" value="RecA_C"/>
    <property type="match status" value="1"/>
</dbReference>
<dbReference type="PRINTS" id="PR00142">
    <property type="entry name" value="RECA"/>
</dbReference>
<dbReference type="SMART" id="SM00382">
    <property type="entry name" value="AAA"/>
    <property type="match status" value="1"/>
</dbReference>
<dbReference type="SUPFAM" id="SSF52540">
    <property type="entry name" value="P-loop containing nucleoside triphosphate hydrolases"/>
    <property type="match status" value="1"/>
</dbReference>
<dbReference type="SUPFAM" id="SSF54752">
    <property type="entry name" value="RecA protein, C-terminal domain"/>
    <property type="match status" value="1"/>
</dbReference>
<dbReference type="PROSITE" id="PS00321">
    <property type="entry name" value="RECA_1"/>
    <property type="match status" value="1"/>
</dbReference>
<dbReference type="PROSITE" id="PS50162">
    <property type="entry name" value="RECA_2"/>
    <property type="match status" value="1"/>
</dbReference>
<dbReference type="PROSITE" id="PS50163">
    <property type="entry name" value="RECA_3"/>
    <property type="match status" value="1"/>
</dbReference>
<accession>B4RLX8</accession>
<evidence type="ECO:0000255" key="1">
    <source>
        <dbReference type="HAMAP-Rule" id="MF_00268"/>
    </source>
</evidence>
<sequence length="348" mass="37643">MSDDKSKALAAALAQIEKSFGKGAIMKMDGSQQEENLEVISTGSLGLDLALGVGGLPRGRIVEIFGPESSGKTTLCLEAVAQCQKNGGVCAFVDAEHAFDPVYARKLGVKVEELYLSQPDTGEQALEICDTLVRSGGIDMVVVDSVAALVPKAEIEGDMGDSHVGLQARLMSQALRKLTGHIKKTNTLVVFINQIRMKIGVMFGSPETTTGGNALKFYSSVRLDIRRTGSIKKGEEVLGNETRVKVIKNKVAPPFRQAEFDILYGEGISWEGELIDIGVKNDIINKSGAWYSYNGAKIGQGKDNVRVWLKENPEISDEIDAKIRALNGVEMHITEGTQDETDGERPEE</sequence>
<feature type="chain" id="PRO_1000114350" description="Protein RecA">
    <location>
        <begin position="1"/>
        <end position="348"/>
    </location>
</feature>
<feature type="binding site" evidence="1">
    <location>
        <begin position="66"/>
        <end position="73"/>
    </location>
    <ligand>
        <name>ATP</name>
        <dbReference type="ChEBI" id="CHEBI:30616"/>
    </ligand>
</feature>
<organism>
    <name type="scientific">Neisseria gonorrhoeae (strain NCCP11945)</name>
    <dbReference type="NCBI Taxonomy" id="521006"/>
    <lineage>
        <taxon>Bacteria</taxon>
        <taxon>Pseudomonadati</taxon>
        <taxon>Pseudomonadota</taxon>
        <taxon>Betaproteobacteria</taxon>
        <taxon>Neisseriales</taxon>
        <taxon>Neisseriaceae</taxon>
        <taxon>Neisseria</taxon>
    </lineage>
</organism>
<keyword id="KW-0067">ATP-binding</keyword>
<keyword id="KW-0963">Cytoplasm</keyword>
<keyword id="KW-0227">DNA damage</keyword>
<keyword id="KW-0233">DNA recombination</keyword>
<keyword id="KW-0234">DNA repair</keyword>
<keyword id="KW-0238">DNA-binding</keyword>
<keyword id="KW-0547">Nucleotide-binding</keyword>
<keyword id="KW-0742">SOS response</keyword>
<reference key="1">
    <citation type="journal article" date="2008" name="J. Bacteriol.">
        <title>Complete genome sequence of Neisseria gonorrhoeae NCCP11945.</title>
        <authorList>
            <person name="Chung G.T."/>
            <person name="Yoo J.S."/>
            <person name="Oh H.B."/>
            <person name="Lee Y.S."/>
            <person name="Cha S.H."/>
            <person name="Kim S.J."/>
            <person name="Yoo C.K."/>
        </authorList>
    </citation>
    <scope>NUCLEOTIDE SEQUENCE [LARGE SCALE GENOMIC DNA]</scope>
    <source>
        <strain>NCCP11945</strain>
    </source>
</reference>
<protein>
    <recommendedName>
        <fullName evidence="1">Protein RecA</fullName>
    </recommendedName>
    <alternativeName>
        <fullName evidence="1">Recombinase A</fullName>
    </alternativeName>
</protein>
<comment type="function">
    <text evidence="1">Can catalyze the hydrolysis of ATP in the presence of single-stranded DNA, the ATP-dependent uptake of single-stranded DNA by duplex DNA, and the ATP-dependent hybridization of homologous single-stranded DNAs. It interacts with LexA causing its activation and leading to its autocatalytic cleavage.</text>
</comment>
<comment type="subcellular location">
    <subcellularLocation>
        <location evidence="1">Cytoplasm</location>
    </subcellularLocation>
</comment>
<comment type="similarity">
    <text evidence="1">Belongs to the RecA family.</text>
</comment>
<name>RECA_NEIG2</name>
<gene>
    <name evidence="1" type="primary">recA</name>
    <name type="ordered locus">NGK_1138</name>
</gene>
<proteinExistence type="inferred from homology"/>